<accession>P05395</accession>
<dbReference type="PIR" id="S07140">
    <property type="entry name" value="S07140"/>
</dbReference>
<dbReference type="SMR" id="P05395"/>
<dbReference type="GO" id="GO:1990904">
    <property type="term" value="C:ribonucleoprotein complex"/>
    <property type="evidence" value="ECO:0007669"/>
    <property type="project" value="UniProtKB-KW"/>
</dbReference>
<dbReference type="GO" id="GO:0005840">
    <property type="term" value="C:ribosome"/>
    <property type="evidence" value="ECO:0007669"/>
    <property type="project" value="UniProtKB-KW"/>
</dbReference>
<dbReference type="GO" id="GO:0003735">
    <property type="term" value="F:structural constituent of ribosome"/>
    <property type="evidence" value="ECO:0007669"/>
    <property type="project" value="InterPro"/>
</dbReference>
<dbReference type="GO" id="GO:0006412">
    <property type="term" value="P:translation"/>
    <property type="evidence" value="ECO:0007669"/>
    <property type="project" value="InterPro"/>
</dbReference>
<dbReference type="Gene3D" id="1.20.5.710">
    <property type="entry name" value="Single helix bin"/>
    <property type="match status" value="1"/>
</dbReference>
<dbReference type="InterPro" id="IPR008932">
    <property type="entry name" value="Ribosomal_bL12_oligo"/>
</dbReference>
<dbReference type="InterPro" id="IPR036235">
    <property type="entry name" value="Ribosomal_bL12_oligo_N_sf"/>
</dbReference>
<dbReference type="Pfam" id="PF16320">
    <property type="entry name" value="Ribosomal_L12_N"/>
    <property type="match status" value="1"/>
</dbReference>
<dbReference type="SUPFAM" id="SSF48300">
    <property type="entry name" value="Ribosomal protein L7/12, oligomerisation (N-terminal) domain"/>
    <property type="match status" value="1"/>
</dbReference>
<reference key="1">
    <citation type="journal article" date="1979" name="Biochim. Biophys. Acta">
        <title>The N-terminal sequence of the ribosomal 'A' protein from two moderate halophiles, Vibrio costicola and an unidentified moderate (NRCC 11227).</title>
        <authorList>
            <person name="Falkenberg P."/>
            <person name="Yaguchi M."/>
            <person name="Rollin C.F."/>
            <person name="Matheson A.T."/>
            <person name="Wydro R."/>
        </authorList>
    </citation>
    <scope>PROTEIN SEQUENCE</scope>
</reference>
<feature type="chain" id="PRO_0000157602" description="Large ribosomal subunit protein bL12">
    <location>
        <begin position="1"/>
        <end position="38" status="greater than"/>
    </location>
</feature>
<feature type="non-terminal residue">
    <location>
        <position position="38"/>
    </location>
</feature>
<comment type="function">
    <text evidence="1">Forms part of the ribosomal stalk which helps the ribosome interact with GTP-bound translation factors. Is thus essential for accurate translation (By similarity).</text>
</comment>
<comment type="subunit">
    <text evidence="1">Homodimer. Part of the ribosomal stalk of the 50S ribosomal subunit. Forms a multimeric L10(L12)X complex, where L10 forms an elongated spine to which 2 to 4 L12 dimers bind in a sequential fashion. Binds GTP-bound translation factors (By similarity).</text>
</comment>
<comment type="similarity">
    <text evidence="2">Belongs to the bacterial ribosomal protein bL12 family.</text>
</comment>
<name>RL7_SALCS</name>
<protein>
    <recommendedName>
        <fullName evidence="2">Large ribosomal subunit protein bL12</fullName>
    </recommendedName>
    <alternativeName>
        <fullName>50S ribosomal protein L7/L12</fullName>
    </alternativeName>
    <alternativeName>
        <fullName>Ribosomal protein 'A'</fullName>
    </alternativeName>
</protein>
<gene>
    <name type="primary">rplL</name>
</gene>
<proteinExistence type="evidence at protein level"/>
<sequence length="38" mass="4025">SITNEQILDAIADMSVMQVVELIEAMEEKFGVSAAAAV</sequence>
<keyword id="KW-0903">Direct protein sequencing</keyword>
<keyword id="KW-0687">Ribonucleoprotein</keyword>
<keyword id="KW-0689">Ribosomal protein</keyword>
<organism>
    <name type="scientific">Salinivibrio costicola</name>
    <name type="common">Vibrio costicola</name>
    <dbReference type="NCBI Taxonomy" id="51367"/>
    <lineage>
        <taxon>Bacteria</taxon>
        <taxon>Pseudomonadati</taxon>
        <taxon>Pseudomonadota</taxon>
        <taxon>Gammaproteobacteria</taxon>
        <taxon>Vibrionales</taxon>
        <taxon>Vibrionaceae</taxon>
        <taxon>Salinivibrio</taxon>
    </lineage>
</organism>
<evidence type="ECO:0000250" key="1"/>
<evidence type="ECO:0000305" key="2"/>